<protein>
    <recommendedName>
        <fullName>F-box/LRR-repeat protein At4g14096</fullName>
    </recommendedName>
</protein>
<proteinExistence type="evidence at transcript level"/>
<keyword id="KW-0433">Leucine-rich repeat</keyword>
<keyword id="KW-1185">Reference proteome</keyword>
<keyword id="KW-0677">Repeat</keyword>
<dbReference type="EMBL" id="Z97335">
    <property type="protein sequence ID" value="CAB10188.1"/>
    <property type="status" value="ALT_SEQ"/>
    <property type="molecule type" value="Genomic_DNA"/>
</dbReference>
<dbReference type="EMBL" id="AL161538">
    <property type="protein sequence ID" value="CAB78451.1"/>
    <property type="status" value="ALT_SEQ"/>
    <property type="molecule type" value="Genomic_DNA"/>
</dbReference>
<dbReference type="EMBL" id="CP002687">
    <property type="protein sequence ID" value="AEE83371.1"/>
    <property type="molecule type" value="Genomic_DNA"/>
</dbReference>
<dbReference type="EMBL" id="CP002687">
    <property type="protein sequence ID" value="ANM67110.1"/>
    <property type="molecule type" value="Genomic_DNA"/>
</dbReference>
<dbReference type="EMBL" id="AY042860">
    <property type="protein sequence ID" value="AAK68800.1"/>
    <property type="molecule type" value="mRNA"/>
</dbReference>
<dbReference type="EMBL" id="AY128734">
    <property type="protein sequence ID" value="AAM91134.1"/>
    <property type="molecule type" value="mRNA"/>
</dbReference>
<dbReference type="PIR" id="B71402">
    <property type="entry name" value="B71402"/>
</dbReference>
<dbReference type="RefSeq" id="NP_001319929.1">
    <property type="nucleotide sequence ID" value="NM_001340900.1"/>
</dbReference>
<dbReference type="RefSeq" id="NP_567421.1">
    <property type="nucleotide sequence ID" value="NM_117486.4"/>
</dbReference>
<dbReference type="FunCoup" id="Q94B46">
    <property type="interactions" value="757"/>
</dbReference>
<dbReference type="PaxDb" id="3702-AT4G14096.1"/>
<dbReference type="ProteomicsDB" id="232072"/>
<dbReference type="EnsemblPlants" id="AT4G14096.1">
    <property type="protein sequence ID" value="AT4G14096.1"/>
    <property type="gene ID" value="AT4G14096"/>
</dbReference>
<dbReference type="EnsemblPlants" id="AT4G14096.2">
    <property type="protein sequence ID" value="AT4G14096.2"/>
    <property type="gene ID" value="AT4G14096"/>
</dbReference>
<dbReference type="GeneID" id="827047"/>
<dbReference type="Gramene" id="AT4G14096.1">
    <property type="protein sequence ID" value="AT4G14096.1"/>
    <property type="gene ID" value="AT4G14096"/>
</dbReference>
<dbReference type="Gramene" id="AT4G14096.2">
    <property type="protein sequence ID" value="AT4G14096.2"/>
    <property type="gene ID" value="AT4G14096"/>
</dbReference>
<dbReference type="KEGG" id="ath:AT4G14096"/>
<dbReference type="Araport" id="AT4G14096"/>
<dbReference type="TAIR" id="AT4G14096"/>
<dbReference type="eggNOG" id="ENOG502RXIZ">
    <property type="taxonomic scope" value="Eukaryota"/>
</dbReference>
<dbReference type="HOGENOM" id="CLU_010721_7_4_1"/>
<dbReference type="InParanoid" id="Q94B46"/>
<dbReference type="OMA" id="TDCCIAN"/>
<dbReference type="PhylomeDB" id="Q94B46"/>
<dbReference type="PRO" id="PR:Q94B46"/>
<dbReference type="Proteomes" id="UP000006548">
    <property type="component" value="Chromosome 4"/>
</dbReference>
<dbReference type="ExpressionAtlas" id="Q94B46">
    <property type="expression patterns" value="baseline and differential"/>
</dbReference>
<dbReference type="CDD" id="cd22160">
    <property type="entry name" value="F-box_AtFBL13-like"/>
    <property type="match status" value="1"/>
</dbReference>
<dbReference type="Gene3D" id="1.20.1280.50">
    <property type="match status" value="1"/>
</dbReference>
<dbReference type="Gene3D" id="3.80.10.10">
    <property type="entry name" value="Ribonuclease Inhibitor"/>
    <property type="match status" value="1"/>
</dbReference>
<dbReference type="InterPro" id="IPR036047">
    <property type="entry name" value="F-box-like_dom_sf"/>
</dbReference>
<dbReference type="InterPro" id="IPR053781">
    <property type="entry name" value="F-box_AtFBL13-like"/>
</dbReference>
<dbReference type="InterPro" id="IPR001810">
    <property type="entry name" value="F-box_dom"/>
</dbReference>
<dbReference type="InterPro" id="IPR006566">
    <property type="entry name" value="FBD"/>
</dbReference>
<dbReference type="InterPro" id="IPR055294">
    <property type="entry name" value="FBL60-like"/>
</dbReference>
<dbReference type="InterPro" id="IPR032675">
    <property type="entry name" value="LRR_dom_sf"/>
</dbReference>
<dbReference type="InterPro" id="IPR055411">
    <property type="entry name" value="LRR_FXL15/At3g58940/PEG3-like"/>
</dbReference>
<dbReference type="PANTHER" id="PTHR31293">
    <property type="entry name" value="RNI-LIKE SUPERFAMILY PROTEIN"/>
    <property type="match status" value="1"/>
</dbReference>
<dbReference type="PANTHER" id="PTHR31293:SF12">
    <property type="entry name" value="RNI-LIKE SUPERFAMILY PROTEIN"/>
    <property type="match status" value="1"/>
</dbReference>
<dbReference type="Pfam" id="PF00646">
    <property type="entry name" value="F-box"/>
    <property type="match status" value="1"/>
</dbReference>
<dbReference type="Pfam" id="PF24758">
    <property type="entry name" value="LRR_At5g56370"/>
    <property type="match status" value="1"/>
</dbReference>
<dbReference type="SMART" id="SM00579">
    <property type="entry name" value="FBD"/>
    <property type="match status" value="1"/>
</dbReference>
<dbReference type="SMART" id="SM00256">
    <property type="entry name" value="FBOX"/>
    <property type="match status" value="1"/>
</dbReference>
<dbReference type="SUPFAM" id="SSF81383">
    <property type="entry name" value="F-box domain"/>
    <property type="match status" value="1"/>
</dbReference>
<dbReference type="SUPFAM" id="SSF52047">
    <property type="entry name" value="RNI-like"/>
    <property type="match status" value="1"/>
</dbReference>
<evidence type="ECO:0000305" key="1"/>
<comment type="sequence caution" evidence="1">
    <conflict type="erroneous gene model prediction">
        <sequence resource="EMBL-CDS" id="CAB10188"/>
    </conflict>
    <text>The predicted gene At4g14090 has been split into 3 genes: At4g14096, At4g14100 and At4g14103.</text>
</comment>
<comment type="sequence caution" evidence="1">
    <conflict type="erroneous gene model prediction">
        <sequence resource="EMBL-CDS" id="CAB78451"/>
    </conflict>
    <text>The predicted gene At4g14090 has been split into 3 genes: At4g14096, At4g14100 and At4g14103.</text>
</comment>
<accession>Q94B46</accession>
<accession>O23269</accession>
<reference key="1">
    <citation type="journal article" date="1998" name="Nature">
        <title>Analysis of 1.9 Mb of contiguous sequence from chromosome 4 of Arabidopsis thaliana.</title>
        <authorList>
            <person name="Bevan M."/>
            <person name="Bancroft I."/>
            <person name="Bent E."/>
            <person name="Love K."/>
            <person name="Goodman H.M."/>
            <person name="Dean C."/>
            <person name="Bergkamp R."/>
            <person name="Dirkse W."/>
            <person name="van Staveren M."/>
            <person name="Stiekema W."/>
            <person name="Drost L."/>
            <person name="Ridley P."/>
            <person name="Hudson S.-A."/>
            <person name="Patel K."/>
            <person name="Murphy G."/>
            <person name="Piffanelli P."/>
            <person name="Wedler H."/>
            <person name="Wedler E."/>
            <person name="Wambutt R."/>
            <person name="Weitzenegger T."/>
            <person name="Pohl T."/>
            <person name="Terryn N."/>
            <person name="Gielen J."/>
            <person name="Villarroel R."/>
            <person name="De Clercq R."/>
            <person name="van Montagu M."/>
            <person name="Lecharny A."/>
            <person name="Aubourg S."/>
            <person name="Gy I."/>
            <person name="Kreis M."/>
            <person name="Lao N."/>
            <person name="Kavanagh T."/>
            <person name="Hempel S."/>
            <person name="Kotter P."/>
            <person name="Entian K.-D."/>
            <person name="Rieger M."/>
            <person name="Schaefer M."/>
            <person name="Funk B."/>
            <person name="Mueller-Auer S."/>
            <person name="Silvey M."/>
            <person name="James R."/>
            <person name="Monfort A."/>
            <person name="Pons A."/>
            <person name="Puigdomenech P."/>
            <person name="Douka A."/>
            <person name="Voukelatou E."/>
            <person name="Milioni D."/>
            <person name="Hatzopoulos P."/>
            <person name="Piravandi E."/>
            <person name="Obermaier B."/>
            <person name="Hilbert H."/>
            <person name="Duesterhoeft A."/>
            <person name="Moores T."/>
            <person name="Jones J.D.G."/>
            <person name="Eneva T."/>
            <person name="Palme K."/>
            <person name="Benes V."/>
            <person name="Rechmann S."/>
            <person name="Ansorge W."/>
            <person name="Cooke R."/>
            <person name="Berger C."/>
            <person name="Delseny M."/>
            <person name="Voet M."/>
            <person name="Volckaert G."/>
            <person name="Mewes H.-W."/>
            <person name="Klosterman S."/>
            <person name="Schueller C."/>
            <person name="Chalwatzis N."/>
        </authorList>
    </citation>
    <scope>NUCLEOTIDE SEQUENCE [LARGE SCALE GENOMIC DNA]</scope>
    <source>
        <strain>cv. Columbia</strain>
    </source>
</reference>
<reference key="2">
    <citation type="journal article" date="1999" name="Nature">
        <title>Sequence and analysis of chromosome 4 of the plant Arabidopsis thaliana.</title>
        <authorList>
            <person name="Mayer K.F.X."/>
            <person name="Schueller C."/>
            <person name="Wambutt R."/>
            <person name="Murphy G."/>
            <person name="Volckaert G."/>
            <person name="Pohl T."/>
            <person name="Duesterhoeft A."/>
            <person name="Stiekema W."/>
            <person name="Entian K.-D."/>
            <person name="Terryn N."/>
            <person name="Harris B."/>
            <person name="Ansorge W."/>
            <person name="Brandt P."/>
            <person name="Grivell L.A."/>
            <person name="Rieger M."/>
            <person name="Weichselgartner M."/>
            <person name="de Simone V."/>
            <person name="Obermaier B."/>
            <person name="Mache R."/>
            <person name="Mueller M."/>
            <person name="Kreis M."/>
            <person name="Delseny M."/>
            <person name="Puigdomenech P."/>
            <person name="Watson M."/>
            <person name="Schmidtheini T."/>
            <person name="Reichert B."/>
            <person name="Portetelle D."/>
            <person name="Perez-Alonso M."/>
            <person name="Boutry M."/>
            <person name="Bancroft I."/>
            <person name="Vos P."/>
            <person name="Hoheisel J."/>
            <person name="Zimmermann W."/>
            <person name="Wedler H."/>
            <person name="Ridley P."/>
            <person name="Langham S.-A."/>
            <person name="McCullagh B."/>
            <person name="Bilham L."/>
            <person name="Robben J."/>
            <person name="van der Schueren J."/>
            <person name="Grymonprez B."/>
            <person name="Chuang Y.-J."/>
            <person name="Vandenbussche F."/>
            <person name="Braeken M."/>
            <person name="Weltjens I."/>
            <person name="Voet M."/>
            <person name="Bastiaens I."/>
            <person name="Aert R."/>
            <person name="Defoor E."/>
            <person name="Weitzenegger T."/>
            <person name="Bothe G."/>
            <person name="Ramsperger U."/>
            <person name="Hilbert H."/>
            <person name="Braun M."/>
            <person name="Holzer E."/>
            <person name="Brandt A."/>
            <person name="Peters S."/>
            <person name="van Staveren M."/>
            <person name="Dirkse W."/>
            <person name="Mooijman P."/>
            <person name="Klein Lankhorst R."/>
            <person name="Rose M."/>
            <person name="Hauf J."/>
            <person name="Koetter P."/>
            <person name="Berneiser S."/>
            <person name="Hempel S."/>
            <person name="Feldpausch M."/>
            <person name="Lamberth S."/>
            <person name="Van den Daele H."/>
            <person name="De Keyser A."/>
            <person name="Buysshaert C."/>
            <person name="Gielen J."/>
            <person name="Villarroel R."/>
            <person name="De Clercq R."/>
            <person name="van Montagu M."/>
            <person name="Rogers J."/>
            <person name="Cronin A."/>
            <person name="Quail M.A."/>
            <person name="Bray-Allen S."/>
            <person name="Clark L."/>
            <person name="Doggett J."/>
            <person name="Hall S."/>
            <person name="Kay M."/>
            <person name="Lennard N."/>
            <person name="McLay K."/>
            <person name="Mayes R."/>
            <person name="Pettett A."/>
            <person name="Rajandream M.A."/>
            <person name="Lyne M."/>
            <person name="Benes V."/>
            <person name="Rechmann S."/>
            <person name="Borkova D."/>
            <person name="Bloecker H."/>
            <person name="Scharfe M."/>
            <person name="Grimm M."/>
            <person name="Loehnert T.-H."/>
            <person name="Dose S."/>
            <person name="de Haan M."/>
            <person name="Maarse A.C."/>
            <person name="Schaefer M."/>
            <person name="Mueller-Auer S."/>
            <person name="Gabel C."/>
            <person name="Fuchs M."/>
            <person name="Fartmann B."/>
            <person name="Granderath K."/>
            <person name="Dauner D."/>
            <person name="Herzl A."/>
            <person name="Neumann S."/>
            <person name="Argiriou A."/>
            <person name="Vitale D."/>
            <person name="Liguori R."/>
            <person name="Piravandi E."/>
            <person name="Massenet O."/>
            <person name="Quigley F."/>
            <person name="Clabauld G."/>
            <person name="Muendlein A."/>
            <person name="Felber R."/>
            <person name="Schnabl S."/>
            <person name="Hiller R."/>
            <person name="Schmidt W."/>
            <person name="Lecharny A."/>
            <person name="Aubourg S."/>
            <person name="Chefdor F."/>
            <person name="Cooke R."/>
            <person name="Berger C."/>
            <person name="Monfort A."/>
            <person name="Casacuberta E."/>
            <person name="Gibbons T."/>
            <person name="Weber N."/>
            <person name="Vandenbol M."/>
            <person name="Bargues M."/>
            <person name="Terol J."/>
            <person name="Torres A."/>
            <person name="Perez-Perez A."/>
            <person name="Purnelle B."/>
            <person name="Bent E."/>
            <person name="Johnson S."/>
            <person name="Tacon D."/>
            <person name="Jesse T."/>
            <person name="Heijnen L."/>
            <person name="Schwarz S."/>
            <person name="Scholler P."/>
            <person name="Heber S."/>
            <person name="Francs P."/>
            <person name="Bielke C."/>
            <person name="Frishman D."/>
            <person name="Haase D."/>
            <person name="Lemcke K."/>
            <person name="Mewes H.-W."/>
            <person name="Stocker S."/>
            <person name="Zaccaria P."/>
            <person name="Bevan M."/>
            <person name="Wilson R.K."/>
            <person name="de la Bastide M."/>
            <person name="Habermann K."/>
            <person name="Parnell L."/>
            <person name="Dedhia N."/>
            <person name="Gnoj L."/>
            <person name="Schutz K."/>
            <person name="Huang E."/>
            <person name="Spiegel L."/>
            <person name="Sekhon M."/>
            <person name="Murray J."/>
            <person name="Sheet P."/>
            <person name="Cordes M."/>
            <person name="Abu-Threideh J."/>
            <person name="Stoneking T."/>
            <person name="Kalicki J."/>
            <person name="Graves T."/>
            <person name="Harmon G."/>
            <person name="Edwards J."/>
            <person name="Latreille P."/>
            <person name="Courtney L."/>
            <person name="Cloud J."/>
            <person name="Abbott A."/>
            <person name="Scott K."/>
            <person name="Johnson D."/>
            <person name="Minx P."/>
            <person name="Bentley D."/>
            <person name="Fulton B."/>
            <person name="Miller N."/>
            <person name="Greco T."/>
            <person name="Kemp K."/>
            <person name="Kramer J."/>
            <person name="Fulton L."/>
            <person name="Mardis E."/>
            <person name="Dante M."/>
            <person name="Pepin K."/>
            <person name="Hillier L.W."/>
            <person name="Nelson J."/>
            <person name="Spieth J."/>
            <person name="Ryan E."/>
            <person name="Andrews S."/>
            <person name="Geisel C."/>
            <person name="Layman D."/>
            <person name="Du H."/>
            <person name="Ali J."/>
            <person name="Berghoff A."/>
            <person name="Jones K."/>
            <person name="Drone K."/>
            <person name="Cotton M."/>
            <person name="Joshu C."/>
            <person name="Antonoiu B."/>
            <person name="Zidanic M."/>
            <person name="Strong C."/>
            <person name="Sun H."/>
            <person name="Lamar B."/>
            <person name="Yordan C."/>
            <person name="Ma P."/>
            <person name="Zhong J."/>
            <person name="Preston R."/>
            <person name="Vil D."/>
            <person name="Shekher M."/>
            <person name="Matero A."/>
            <person name="Shah R."/>
            <person name="Swaby I.K."/>
            <person name="O'Shaughnessy A."/>
            <person name="Rodriguez M."/>
            <person name="Hoffman J."/>
            <person name="Till S."/>
            <person name="Granat S."/>
            <person name="Shohdy N."/>
            <person name="Hasegawa A."/>
            <person name="Hameed A."/>
            <person name="Lodhi M."/>
            <person name="Johnson A."/>
            <person name="Chen E."/>
            <person name="Marra M.A."/>
            <person name="Martienssen R."/>
            <person name="McCombie W.R."/>
        </authorList>
    </citation>
    <scope>NUCLEOTIDE SEQUENCE [LARGE SCALE GENOMIC DNA]</scope>
    <source>
        <strain>cv. Columbia</strain>
    </source>
</reference>
<reference key="3">
    <citation type="journal article" date="2017" name="Plant J.">
        <title>Araport11: a complete reannotation of the Arabidopsis thaliana reference genome.</title>
        <authorList>
            <person name="Cheng C.Y."/>
            <person name="Krishnakumar V."/>
            <person name="Chan A.P."/>
            <person name="Thibaud-Nissen F."/>
            <person name="Schobel S."/>
            <person name="Town C.D."/>
        </authorList>
    </citation>
    <scope>GENOME REANNOTATION</scope>
    <source>
        <strain>cv. Columbia</strain>
    </source>
</reference>
<reference key="4">
    <citation type="journal article" date="2003" name="Science">
        <title>Empirical analysis of transcriptional activity in the Arabidopsis genome.</title>
        <authorList>
            <person name="Yamada K."/>
            <person name="Lim J."/>
            <person name="Dale J.M."/>
            <person name="Chen H."/>
            <person name="Shinn P."/>
            <person name="Palm C.J."/>
            <person name="Southwick A.M."/>
            <person name="Wu H.C."/>
            <person name="Kim C.J."/>
            <person name="Nguyen M."/>
            <person name="Pham P.K."/>
            <person name="Cheuk R.F."/>
            <person name="Karlin-Newmann G."/>
            <person name="Liu S.X."/>
            <person name="Lam B."/>
            <person name="Sakano H."/>
            <person name="Wu T."/>
            <person name="Yu G."/>
            <person name="Miranda M."/>
            <person name="Quach H.L."/>
            <person name="Tripp M."/>
            <person name="Chang C.H."/>
            <person name="Lee J.M."/>
            <person name="Toriumi M.J."/>
            <person name="Chan M.M."/>
            <person name="Tang C.C."/>
            <person name="Onodera C.S."/>
            <person name="Deng J.M."/>
            <person name="Akiyama K."/>
            <person name="Ansari Y."/>
            <person name="Arakawa T."/>
            <person name="Banh J."/>
            <person name="Banno F."/>
            <person name="Bowser L."/>
            <person name="Brooks S.Y."/>
            <person name="Carninci P."/>
            <person name="Chao Q."/>
            <person name="Choy N."/>
            <person name="Enju A."/>
            <person name="Goldsmith A.D."/>
            <person name="Gurjal M."/>
            <person name="Hansen N.F."/>
            <person name="Hayashizaki Y."/>
            <person name="Johnson-Hopson C."/>
            <person name="Hsuan V.W."/>
            <person name="Iida K."/>
            <person name="Karnes M."/>
            <person name="Khan S."/>
            <person name="Koesema E."/>
            <person name="Ishida J."/>
            <person name="Jiang P.X."/>
            <person name="Jones T."/>
            <person name="Kawai J."/>
            <person name="Kamiya A."/>
            <person name="Meyers C."/>
            <person name="Nakajima M."/>
            <person name="Narusaka M."/>
            <person name="Seki M."/>
            <person name="Sakurai T."/>
            <person name="Satou M."/>
            <person name="Tamse R."/>
            <person name="Vaysberg M."/>
            <person name="Wallender E.K."/>
            <person name="Wong C."/>
            <person name="Yamamura Y."/>
            <person name="Yuan S."/>
            <person name="Shinozaki K."/>
            <person name="Davis R.W."/>
            <person name="Theologis A."/>
            <person name="Ecker J.R."/>
        </authorList>
    </citation>
    <scope>NUCLEOTIDE SEQUENCE [LARGE SCALE MRNA]</scope>
    <source>
        <strain>cv. Columbia</strain>
    </source>
</reference>
<sequence length="468" mass="52873">MDLSGCRDIISSLPEAISCHILSFLPTKEAASTSVLSKKWRYLFAFVPNLDLDESVYLNPENETEVSSSFMDFVDRVLALQGNSPLHKFSLKIGDGVEPDRIIPWINNVLERGVSDLDLHVYMETEFVFPSEMFLSKTLVRLKLMLYPLLEFEDVYLPKLKTLYIDSCYFEKYGIGLTKLLSGCPILEDLVLDDIPWCTWDFASVSVPTLKRLTFSTQVRDEFPKSVSIDTPNLVYLKFTDTVAGKYPKVNFDSLVEAHIDLRLLQGHQGYGENDMVGNATDFIMRICNVKTLYLSSNTLQVLTYSCDAIPIFNNLTHLTIESNPEVGWQSLPGLLKNSPNLETLIFQGLIHKATDKCGDVCLCKPREEIRSCLASSPVKVIKILKFGEISDDMEKQREQIKYFLETMPNLEKMILYYNTTSVEDVTEVSSRLQRLVSKLASSTCIVQLISDNLSLSSTVSTNGLLCF</sequence>
<organism>
    <name type="scientific">Arabidopsis thaliana</name>
    <name type="common">Mouse-ear cress</name>
    <dbReference type="NCBI Taxonomy" id="3702"/>
    <lineage>
        <taxon>Eukaryota</taxon>
        <taxon>Viridiplantae</taxon>
        <taxon>Streptophyta</taxon>
        <taxon>Embryophyta</taxon>
        <taxon>Tracheophyta</taxon>
        <taxon>Spermatophyta</taxon>
        <taxon>Magnoliopsida</taxon>
        <taxon>eudicotyledons</taxon>
        <taxon>Gunneridae</taxon>
        <taxon>Pentapetalae</taxon>
        <taxon>rosids</taxon>
        <taxon>malvids</taxon>
        <taxon>Brassicales</taxon>
        <taxon>Brassicaceae</taxon>
        <taxon>Camelineae</taxon>
        <taxon>Arabidopsis</taxon>
    </lineage>
</organism>
<name>FBL74_ARATH</name>
<feature type="chain" id="PRO_0000274958" description="F-box/LRR-repeat protein At4g14096">
    <location>
        <begin position="1"/>
        <end position="468"/>
    </location>
</feature>
<feature type="domain" description="F-box">
    <location>
        <begin position="7"/>
        <end position="60"/>
    </location>
</feature>
<feature type="repeat" description="LRR 1">
    <location>
        <begin position="114"/>
        <end position="136"/>
    </location>
</feature>
<feature type="repeat" description="LRR 2">
    <location>
        <begin position="138"/>
        <end position="167"/>
    </location>
</feature>
<feature type="repeat" description="LRR 3">
    <location>
        <begin position="169"/>
        <end position="194"/>
    </location>
</feature>
<feature type="repeat" description="LRR 4">
    <location>
        <begin position="216"/>
        <end position="241"/>
    </location>
</feature>
<feature type="repeat" description="LRR 5">
    <location>
        <begin position="292"/>
        <end position="323"/>
    </location>
</feature>
<feature type="repeat" description="LRR 6">
    <location>
        <begin position="324"/>
        <end position="349"/>
    </location>
</feature>
<gene>
    <name type="ordered locus">At4g14096</name>
    <name type="ORF">dl3085w</name>
</gene>